<comment type="function">
    <text evidence="1">Catalyzes the phosphorylation of D-glycero-D-manno-heptose 7-phosphate at the C-1 position to selectively form D-glycero-beta-D-manno-heptose-1,7-bisphosphate.</text>
</comment>
<comment type="function">
    <text evidence="1">Catalyzes the ADP transfer from ATP to D-glycero-beta-D-manno-heptose 1-phosphate, yielding ADP-D-glycero-beta-D-manno-heptose.</text>
</comment>
<comment type="catalytic activity">
    <reaction evidence="1">
        <text>D-glycero-beta-D-manno-heptose 7-phosphate + ATP = D-glycero-beta-D-manno-heptose 1,7-bisphosphate + ADP + H(+)</text>
        <dbReference type="Rhea" id="RHEA:27473"/>
        <dbReference type="ChEBI" id="CHEBI:15378"/>
        <dbReference type="ChEBI" id="CHEBI:30616"/>
        <dbReference type="ChEBI" id="CHEBI:60204"/>
        <dbReference type="ChEBI" id="CHEBI:60208"/>
        <dbReference type="ChEBI" id="CHEBI:456216"/>
        <dbReference type="EC" id="2.7.1.167"/>
    </reaction>
</comment>
<comment type="catalytic activity">
    <reaction evidence="1">
        <text>D-glycero-beta-D-manno-heptose 1-phosphate + ATP + H(+) = ADP-D-glycero-beta-D-manno-heptose + diphosphate</text>
        <dbReference type="Rhea" id="RHEA:27465"/>
        <dbReference type="ChEBI" id="CHEBI:15378"/>
        <dbReference type="ChEBI" id="CHEBI:30616"/>
        <dbReference type="ChEBI" id="CHEBI:33019"/>
        <dbReference type="ChEBI" id="CHEBI:59967"/>
        <dbReference type="ChEBI" id="CHEBI:61593"/>
        <dbReference type="EC" id="2.7.7.70"/>
    </reaction>
</comment>
<comment type="pathway">
    <text evidence="1">Nucleotide-sugar biosynthesis; ADP-L-glycero-beta-D-manno-heptose biosynthesis; ADP-L-glycero-beta-D-manno-heptose from D-glycero-beta-D-manno-heptose 7-phosphate: step 1/4.</text>
</comment>
<comment type="pathway">
    <text evidence="1">Nucleotide-sugar biosynthesis; ADP-L-glycero-beta-D-manno-heptose biosynthesis; ADP-L-glycero-beta-D-manno-heptose from D-glycero-beta-D-manno-heptose 7-phosphate: step 3/4.</text>
</comment>
<comment type="subunit">
    <text evidence="1">Homodimer.</text>
</comment>
<comment type="similarity">
    <text evidence="1">In the N-terminal section; belongs to the carbohydrate kinase PfkB family.</text>
</comment>
<comment type="similarity">
    <text evidence="1">In the C-terminal section; belongs to the cytidylyltransferase family.</text>
</comment>
<gene>
    <name evidence="1" type="primary">hldE</name>
    <name type="ordered locus">VSAL_I2676</name>
</gene>
<dbReference type="EC" id="2.7.1.167" evidence="1"/>
<dbReference type="EC" id="2.7.7.70" evidence="1"/>
<dbReference type="EMBL" id="FM178379">
    <property type="protein sequence ID" value="CAQ80360.1"/>
    <property type="molecule type" value="Genomic_DNA"/>
</dbReference>
<dbReference type="RefSeq" id="WP_012551131.1">
    <property type="nucleotide sequence ID" value="NC_011312.1"/>
</dbReference>
<dbReference type="SMR" id="B6ELZ7"/>
<dbReference type="KEGG" id="vsa:VSAL_I2676"/>
<dbReference type="eggNOG" id="COG0615">
    <property type="taxonomic scope" value="Bacteria"/>
</dbReference>
<dbReference type="eggNOG" id="COG2870">
    <property type="taxonomic scope" value="Bacteria"/>
</dbReference>
<dbReference type="HOGENOM" id="CLU_021150_2_1_6"/>
<dbReference type="UniPathway" id="UPA00356">
    <property type="reaction ID" value="UER00437"/>
</dbReference>
<dbReference type="UniPathway" id="UPA00356">
    <property type="reaction ID" value="UER00439"/>
</dbReference>
<dbReference type="Proteomes" id="UP000001730">
    <property type="component" value="Chromosome 1"/>
</dbReference>
<dbReference type="GO" id="GO:0005829">
    <property type="term" value="C:cytosol"/>
    <property type="evidence" value="ECO:0007669"/>
    <property type="project" value="TreeGrafter"/>
</dbReference>
<dbReference type="GO" id="GO:0005524">
    <property type="term" value="F:ATP binding"/>
    <property type="evidence" value="ECO:0007669"/>
    <property type="project" value="UniProtKB-UniRule"/>
</dbReference>
<dbReference type="GO" id="GO:0033785">
    <property type="term" value="F:heptose 7-phosphate kinase activity"/>
    <property type="evidence" value="ECO:0007669"/>
    <property type="project" value="UniProtKB-UniRule"/>
</dbReference>
<dbReference type="GO" id="GO:0033786">
    <property type="term" value="F:heptose-1-phosphate adenylyltransferase activity"/>
    <property type="evidence" value="ECO:0007669"/>
    <property type="project" value="UniProtKB-UniRule"/>
</dbReference>
<dbReference type="GO" id="GO:0016773">
    <property type="term" value="F:phosphotransferase activity, alcohol group as acceptor"/>
    <property type="evidence" value="ECO:0007669"/>
    <property type="project" value="InterPro"/>
</dbReference>
<dbReference type="GO" id="GO:0097171">
    <property type="term" value="P:ADP-L-glycero-beta-D-manno-heptose biosynthetic process"/>
    <property type="evidence" value="ECO:0007669"/>
    <property type="project" value="UniProtKB-UniPathway"/>
</dbReference>
<dbReference type="CDD" id="cd01172">
    <property type="entry name" value="RfaE_like"/>
    <property type="match status" value="1"/>
</dbReference>
<dbReference type="FunFam" id="3.40.1190.20:FF:000002">
    <property type="entry name" value="Bifunctional protein HldE"/>
    <property type="match status" value="1"/>
</dbReference>
<dbReference type="FunFam" id="3.40.50.620:FF:000028">
    <property type="entry name" value="Bifunctional protein HldE"/>
    <property type="match status" value="1"/>
</dbReference>
<dbReference type="Gene3D" id="3.40.1190.20">
    <property type="match status" value="1"/>
</dbReference>
<dbReference type="Gene3D" id="3.40.50.620">
    <property type="entry name" value="HUPs"/>
    <property type="match status" value="1"/>
</dbReference>
<dbReference type="HAMAP" id="MF_01603">
    <property type="entry name" value="HldE"/>
    <property type="match status" value="1"/>
</dbReference>
<dbReference type="InterPro" id="IPR023030">
    <property type="entry name" value="Bifunc_HldE"/>
</dbReference>
<dbReference type="InterPro" id="IPR002173">
    <property type="entry name" value="Carboh/pur_kinase_PfkB_CS"/>
</dbReference>
<dbReference type="InterPro" id="IPR004821">
    <property type="entry name" value="Cyt_trans-like"/>
</dbReference>
<dbReference type="InterPro" id="IPR011611">
    <property type="entry name" value="PfkB_dom"/>
</dbReference>
<dbReference type="InterPro" id="IPR011913">
    <property type="entry name" value="RfaE_dom_I"/>
</dbReference>
<dbReference type="InterPro" id="IPR011914">
    <property type="entry name" value="RfaE_dom_II"/>
</dbReference>
<dbReference type="InterPro" id="IPR029056">
    <property type="entry name" value="Ribokinase-like"/>
</dbReference>
<dbReference type="InterPro" id="IPR014729">
    <property type="entry name" value="Rossmann-like_a/b/a_fold"/>
</dbReference>
<dbReference type="NCBIfam" id="TIGR00125">
    <property type="entry name" value="cyt_tran_rel"/>
    <property type="match status" value="1"/>
</dbReference>
<dbReference type="NCBIfam" id="NF008454">
    <property type="entry name" value="PRK11316.1"/>
    <property type="match status" value="1"/>
</dbReference>
<dbReference type="NCBIfam" id="TIGR02198">
    <property type="entry name" value="rfaE_dom_I"/>
    <property type="match status" value="1"/>
</dbReference>
<dbReference type="NCBIfam" id="TIGR02199">
    <property type="entry name" value="rfaE_dom_II"/>
    <property type="match status" value="1"/>
</dbReference>
<dbReference type="PANTHER" id="PTHR46969">
    <property type="entry name" value="BIFUNCTIONAL PROTEIN HLDE"/>
    <property type="match status" value="1"/>
</dbReference>
<dbReference type="PANTHER" id="PTHR46969:SF1">
    <property type="entry name" value="BIFUNCTIONAL PROTEIN HLDE"/>
    <property type="match status" value="1"/>
</dbReference>
<dbReference type="Pfam" id="PF01467">
    <property type="entry name" value="CTP_transf_like"/>
    <property type="match status" value="1"/>
</dbReference>
<dbReference type="Pfam" id="PF00294">
    <property type="entry name" value="PfkB"/>
    <property type="match status" value="1"/>
</dbReference>
<dbReference type="SUPFAM" id="SSF52374">
    <property type="entry name" value="Nucleotidylyl transferase"/>
    <property type="match status" value="1"/>
</dbReference>
<dbReference type="SUPFAM" id="SSF53613">
    <property type="entry name" value="Ribokinase-like"/>
    <property type="match status" value="1"/>
</dbReference>
<dbReference type="PROSITE" id="PS00583">
    <property type="entry name" value="PFKB_KINASES_1"/>
    <property type="match status" value="1"/>
</dbReference>
<protein>
    <recommendedName>
        <fullName evidence="1">Bifunctional protein HldE</fullName>
    </recommendedName>
    <domain>
        <recommendedName>
            <fullName evidence="1">D-beta-D-heptose 7-phosphate kinase</fullName>
            <ecNumber evidence="1">2.7.1.167</ecNumber>
        </recommendedName>
        <alternativeName>
            <fullName evidence="1">D-beta-D-heptose 7-phosphotransferase</fullName>
        </alternativeName>
        <alternativeName>
            <fullName evidence="1">D-glycero-beta-D-manno-heptose-7-phosphate kinase</fullName>
        </alternativeName>
    </domain>
    <domain>
        <recommendedName>
            <fullName evidence="1">D-beta-D-heptose 1-phosphate adenylyltransferase</fullName>
            <ecNumber evidence="1">2.7.7.70</ecNumber>
        </recommendedName>
        <alternativeName>
            <fullName evidence="1">D-glycero-beta-D-manno-heptose 1-phosphate adenylyltransferase</fullName>
        </alternativeName>
    </domain>
</protein>
<organism>
    <name type="scientific">Aliivibrio salmonicida (strain LFI1238)</name>
    <name type="common">Vibrio salmonicida (strain LFI1238)</name>
    <dbReference type="NCBI Taxonomy" id="316275"/>
    <lineage>
        <taxon>Bacteria</taxon>
        <taxon>Pseudomonadati</taxon>
        <taxon>Pseudomonadota</taxon>
        <taxon>Gammaproteobacteria</taxon>
        <taxon>Vibrionales</taxon>
        <taxon>Vibrionaceae</taxon>
        <taxon>Aliivibrio</taxon>
    </lineage>
</organism>
<keyword id="KW-0067">ATP-binding</keyword>
<keyword id="KW-0119">Carbohydrate metabolism</keyword>
<keyword id="KW-0418">Kinase</keyword>
<keyword id="KW-0511">Multifunctional enzyme</keyword>
<keyword id="KW-0547">Nucleotide-binding</keyword>
<keyword id="KW-0548">Nucleotidyltransferase</keyword>
<keyword id="KW-0808">Transferase</keyword>
<accession>B6ELZ7</accession>
<proteinExistence type="inferred from homology"/>
<reference key="1">
    <citation type="journal article" date="2008" name="BMC Genomics">
        <title>The genome sequence of the fish pathogen Aliivibrio salmonicida strain LFI1238 shows extensive evidence of gene decay.</title>
        <authorList>
            <person name="Hjerde E."/>
            <person name="Lorentzen M.S."/>
            <person name="Holden M.T."/>
            <person name="Seeger K."/>
            <person name="Paulsen S."/>
            <person name="Bason N."/>
            <person name="Churcher C."/>
            <person name="Harris D."/>
            <person name="Norbertczak H."/>
            <person name="Quail M.A."/>
            <person name="Sanders S."/>
            <person name="Thurston S."/>
            <person name="Parkhill J."/>
            <person name="Willassen N.P."/>
            <person name="Thomson N.R."/>
        </authorList>
    </citation>
    <scope>NUCLEOTIDE SEQUENCE [LARGE SCALE GENOMIC DNA]</scope>
    <source>
        <strain>LFI1238</strain>
    </source>
</reference>
<sequence>MKPTLPNYDQSGVLIVGDVMLDRYWVGPTSRISPEAPVPVVKVENNEERPGGAANVAMNVAALGGQAHLVGLVGEDEPAQALTTTLESLKVHCDFVALPNFPTITKLRVMSRGQQLIRLDFEESFHDIPAEPIISRMQATLPKVKAVVLSDYAKGALEHVQLMIQEARKAGVPVFIDPKGADFERYRGATLLTPNMLEFETVVGKVKDEEDLVVKGQQIIEEFDFEALLVTRSEHGMTLLRSDMAPLHLPTQAREVFDVTGAGDTVISVLAASVSTGKPLDEACALANAAAGVVVGKLGTSTLSTIELAEAIHGSQDSGFGIINEELLISAVKQARERGEKVVMTNGCFDILHAGHVYYLNHAAELGDRLIVAVNTNESVQRLKGPGRPINPTDRRMAVLAGLGAVDWVVPFSEDTPQRLISEVLPTLLVKGGDYEIKDIAGGAEVIAAGGEVKVLNFEDGCSTTGIIEAIKGGRG</sequence>
<feature type="chain" id="PRO_1000148122" description="Bifunctional protein HldE">
    <location>
        <begin position="1"/>
        <end position="476"/>
    </location>
</feature>
<feature type="region of interest" description="Ribokinase">
    <location>
        <begin position="1"/>
        <end position="318"/>
    </location>
</feature>
<feature type="region of interest" description="Cytidylyltransferase">
    <location>
        <begin position="344"/>
        <end position="476"/>
    </location>
</feature>
<feature type="active site" evidence="1">
    <location>
        <position position="264"/>
    </location>
</feature>
<feature type="binding site" evidence="1">
    <location>
        <begin position="195"/>
        <end position="198"/>
    </location>
    <ligand>
        <name>ATP</name>
        <dbReference type="ChEBI" id="CHEBI:30616"/>
    </ligand>
</feature>
<name>HLDE_ALISL</name>
<evidence type="ECO:0000255" key="1">
    <source>
        <dbReference type="HAMAP-Rule" id="MF_01603"/>
    </source>
</evidence>